<comment type="subunit">
    <text evidence="1">Part of the photosystem II complex.</text>
</comment>
<comment type="subcellular location">
    <subcellularLocation>
        <location evidence="1">Cellular thylakoid membrane</location>
        <topology evidence="1">Peripheral membrane protein</topology>
        <orientation evidence="1">Cytoplasmic side</orientation>
    </subcellularLocation>
</comment>
<comment type="similarity">
    <text evidence="1">Belongs to the Psb28 family.</text>
</comment>
<evidence type="ECO:0000255" key="1">
    <source>
        <dbReference type="HAMAP-Rule" id="MF_01370"/>
    </source>
</evidence>
<evidence type="ECO:0000256" key="2">
    <source>
        <dbReference type="SAM" id="MobiDB-lite"/>
    </source>
</evidence>
<name>PSB28_SYNPW</name>
<gene>
    <name evidence="1" type="primary">psb28</name>
    <name type="ordered locus">SynWH7803_1355</name>
</gene>
<keyword id="KW-0472">Membrane</keyword>
<keyword id="KW-0602">Photosynthesis</keyword>
<keyword id="KW-0604">Photosystem II</keyword>
<keyword id="KW-1185">Reference proteome</keyword>
<keyword id="KW-0793">Thylakoid</keyword>
<sequence>MADGDKAAIQFFRGTDEPVVPDIRLTRSRDGRTGQATFIFEQPEALAPETLGNIAGMWMVDEEGELVTREVNGKFVNGKPSALEATYTWKTEQDFERFMRFAERYAETKGLGYSNNSGNNEGADEASEG</sequence>
<reference key="1">
    <citation type="submission" date="2006-05" db="EMBL/GenBank/DDBJ databases">
        <authorList>
            <consortium name="Genoscope"/>
        </authorList>
    </citation>
    <scope>NUCLEOTIDE SEQUENCE [LARGE SCALE GENOMIC DNA]</scope>
    <source>
        <strain>WH7803</strain>
    </source>
</reference>
<proteinExistence type="inferred from homology"/>
<feature type="chain" id="PRO_1000068191" description="Photosystem II reaction center Psb28 protein">
    <location>
        <begin position="1"/>
        <end position="129"/>
    </location>
</feature>
<feature type="region of interest" description="Disordered" evidence="2">
    <location>
        <begin position="110"/>
        <end position="129"/>
    </location>
</feature>
<organism>
    <name type="scientific">Synechococcus sp. (strain WH7803)</name>
    <dbReference type="NCBI Taxonomy" id="32051"/>
    <lineage>
        <taxon>Bacteria</taxon>
        <taxon>Bacillati</taxon>
        <taxon>Cyanobacteriota</taxon>
        <taxon>Cyanophyceae</taxon>
        <taxon>Synechococcales</taxon>
        <taxon>Synechococcaceae</taxon>
        <taxon>Synechococcus</taxon>
    </lineage>
</organism>
<accession>A5GLG6</accession>
<protein>
    <recommendedName>
        <fullName evidence="1">Photosystem II reaction center Psb28 protein</fullName>
    </recommendedName>
    <alternativeName>
        <fullName evidence="1">Photosystem II 13 kDa protein</fullName>
    </alternativeName>
    <alternativeName>
        <fullName evidence="1">Photosystem II reaction center W protein</fullName>
    </alternativeName>
</protein>
<dbReference type="EMBL" id="CT971583">
    <property type="protein sequence ID" value="CAK23781.1"/>
    <property type="molecule type" value="Genomic_DNA"/>
</dbReference>
<dbReference type="SMR" id="A5GLG6"/>
<dbReference type="STRING" id="32051.SynWH7803_1355"/>
<dbReference type="KEGG" id="syx:SynWH7803_1355"/>
<dbReference type="eggNOG" id="ENOG5031GDS">
    <property type="taxonomic scope" value="Bacteria"/>
</dbReference>
<dbReference type="HOGENOM" id="CLU_137323_1_0_3"/>
<dbReference type="OrthoDB" id="559598at2"/>
<dbReference type="Proteomes" id="UP000001566">
    <property type="component" value="Chromosome"/>
</dbReference>
<dbReference type="GO" id="GO:0009654">
    <property type="term" value="C:photosystem II oxygen evolving complex"/>
    <property type="evidence" value="ECO:0007669"/>
    <property type="project" value="InterPro"/>
</dbReference>
<dbReference type="GO" id="GO:0031676">
    <property type="term" value="C:plasma membrane-derived thylakoid membrane"/>
    <property type="evidence" value="ECO:0007669"/>
    <property type="project" value="UniProtKB-SubCell"/>
</dbReference>
<dbReference type="GO" id="GO:0015979">
    <property type="term" value="P:photosynthesis"/>
    <property type="evidence" value="ECO:0007669"/>
    <property type="project" value="UniProtKB-UniRule"/>
</dbReference>
<dbReference type="Gene3D" id="2.40.30.220">
    <property type="entry name" value="Photosystem II Psb28"/>
    <property type="match status" value="1"/>
</dbReference>
<dbReference type="HAMAP" id="MF_01370">
    <property type="entry name" value="PSII_Psb28"/>
    <property type="match status" value="1"/>
</dbReference>
<dbReference type="InterPro" id="IPR038676">
    <property type="entry name" value="Psb28_c1_sf"/>
</dbReference>
<dbReference type="InterPro" id="IPR005610">
    <property type="entry name" value="PSII_Psb28_class-1"/>
</dbReference>
<dbReference type="NCBIfam" id="TIGR03047">
    <property type="entry name" value="PS_II_psb28"/>
    <property type="match status" value="1"/>
</dbReference>
<dbReference type="PANTHER" id="PTHR34963">
    <property type="match status" value="1"/>
</dbReference>
<dbReference type="PANTHER" id="PTHR34963:SF2">
    <property type="entry name" value="PHOTOSYSTEM II REACTION CENTER PSB28 PROTEIN, CHLOROPLASTIC"/>
    <property type="match status" value="1"/>
</dbReference>
<dbReference type="Pfam" id="PF03912">
    <property type="entry name" value="Psb28"/>
    <property type="match status" value="1"/>
</dbReference>